<accession>Q3SLQ1</accession>
<protein>
    <recommendedName>
        <fullName evidence="2">Elongation factor Tu</fullName>
        <shortName evidence="2">EF-Tu</shortName>
        <ecNumber evidence="2">3.6.5.3</ecNumber>
    </recommendedName>
</protein>
<keyword id="KW-0963">Cytoplasm</keyword>
<keyword id="KW-0251">Elongation factor</keyword>
<keyword id="KW-0342">GTP-binding</keyword>
<keyword id="KW-0378">Hydrolase</keyword>
<keyword id="KW-0460">Magnesium</keyword>
<keyword id="KW-0479">Metal-binding</keyword>
<keyword id="KW-0547">Nucleotide-binding</keyword>
<keyword id="KW-0648">Protein biosynthesis</keyword>
<keyword id="KW-1185">Reference proteome</keyword>
<sequence>MAKEKFERTKPHVNVGTIGHVDHGKTTLTAAITTILSKKFGGAAKKYDEIDSSPEEKARGITINTAHVEYETASRHYAHVDCPGHADYVKNMITGAAQMDGAILVVSSADGPMPQTREHILLARQVGVPYIIVYMNKADMVDDAELLELVEMEVRELLSKYDFPGDDTPIIVGSALKALEGDQSDIGEPSIIKLAEALDTYIPEPERAIDKPFLMPVEDVFSISGRGTVVTGRVERGVIKVGEEIEIVGITPTVKTTCTGVEMFRKLLDQGQAGDNVGVLLRGTKREEVQRGQVLAKPGSIKPHTKFSAEIYVLSKDEGGRHTPFFNGYRPQFYFRTTDVTGSIELPAGTEMVMPGDNVSIKVSLIQPIAMDEGLRFAIREGGRTVGAGVVAKIEE</sequence>
<name>EFTU_THIDA</name>
<gene>
    <name evidence="2" type="primary">tuf1</name>
    <name type="ordered locus">Tbd_0391</name>
</gene>
<gene>
    <name evidence="2" type="primary">tuf2</name>
    <name type="ordered locus">Tbd_0403</name>
</gene>
<comment type="function">
    <text evidence="2">GTP hydrolase that promotes the GTP-dependent binding of aminoacyl-tRNA to the A-site of ribosomes during protein biosynthesis.</text>
</comment>
<comment type="catalytic activity">
    <reaction evidence="2">
        <text>GTP + H2O = GDP + phosphate + H(+)</text>
        <dbReference type="Rhea" id="RHEA:19669"/>
        <dbReference type="ChEBI" id="CHEBI:15377"/>
        <dbReference type="ChEBI" id="CHEBI:15378"/>
        <dbReference type="ChEBI" id="CHEBI:37565"/>
        <dbReference type="ChEBI" id="CHEBI:43474"/>
        <dbReference type="ChEBI" id="CHEBI:58189"/>
        <dbReference type="EC" id="3.6.5.3"/>
    </reaction>
    <physiologicalReaction direction="left-to-right" evidence="2">
        <dbReference type="Rhea" id="RHEA:19670"/>
    </physiologicalReaction>
</comment>
<comment type="subunit">
    <text evidence="2">Monomer.</text>
</comment>
<comment type="subcellular location">
    <subcellularLocation>
        <location evidence="2">Cytoplasm</location>
    </subcellularLocation>
</comment>
<comment type="similarity">
    <text evidence="2">Belongs to the TRAFAC class translation factor GTPase superfamily. Classic translation factor GTPase family. EF-Tu/EF-1A subfamily.</text>
</comment>
<reference key="1">
    <citation type="journal article" date="2006" name="J. Bacteriol.">
        <title>The genome sequence of the obligately chemolithoautotrophic, facultatively anaerobic bacterium Thiobacillus denitrificans.</title>
        <authorList>
            <person name="Beller H.R."/>
            <person name="Chain P.S."/>
            <person name="Letain T.E."/>
            <person name="Chakicherla A."/>
            <person name="Larimer F.W."/>
            <person name="Richardson P.M."/>
            <person name="Coleman M.A."/>
            <person name="Wood A.P."/>
            <person name="Kelly D.P."/>
        </authorList>
    </citation>
    <scope>NUCLEOTIDE SEQUENCE [LARGE SCALE GENOMIC DNA]</scope>
    <source>
        <strain>ATCC 25259 / T1</strain>
    </source>
</reference>
<proteinExistence type="inferred from homology"/>
<dbReference type="EC" id="3.6.5.3" evidence="2"/>
<dbReference type="EMBL" id="CP000116">
    <property type="protein sequence ID" value="AAZ96344.1"/>
    <property type="molecule type" value="Genomic_DNA"/>
</dbReference>
<dbReference type="EMBL" id="CP000116">
    <property type="protein sequence ID" value="AAZ96356.1"/>
    <property type="molecule type" value="Genomic_DNA"/>
</dbReference>
<dbReference type="RefSeq" id="WP_011310904.1">
    <property type="nucleotide sequence ID" value="NC_007404.1"/>
</dbReference>
<dbReference type="SMR" id="Q3SLQ1"/>
<dbReference type="STRING" id="292415.Tbd_0391"/>
<dbReference type="KEGG" id="tbd:Tbd_0391"/>
<dbReference type="KEGG" id="tbd:Tbd_0403"/>
<dbReference type="eggNOG" id="COG0050">
    <property type="taxonomic scope" value="Bacteria"/>
</dbReference>
<dbReference type="HOGENOM" id="CLU_007265_0_0_4"/>
<dbReference type="OrthoDB" id="9803139at2"/>
<dbReference type="Proteomes" id="UP000008291">
    <property type="component" value="Chromosome"/>
</dbReference>
<dbReference type="GO" id="GO:0005829">
    <property type="term" value="C:cytosol"/>
    <property type="evidence" value="ECO:0007669"/>
    <property type="project" value="TreeGrafter"/>
</dbReference>
<dbReference type="GO" id="GO:0005525">
    <property type="term" value="F:GTP binding"/>
    <property type="evidence" value="ECO:0007669"/>
    <property type="project" value="UniProtKB-UniRule"/>
</dbReference>
<dbReference type="GO" id="GO:0003924">
    <property type="term" value="F:GTPase activity"/>
    <property type="evidence" value="ECO:0007669"/>
    <property type="project" value="InterPro"/>
</dbReference>
<dbReference type="GO" id="GO:0097216">
    <property type="term" value="F:guanosine tetraphosphate binding"/>
    <property type="evidence" value="ECO:0007669"/>
    <property type="project" value="UniProtKB-ARBA"/>
</dbReference>
<dbReference type="GO" id="GO:0003746">
    <property type="term" value="F:translation elongation factor activity"/>
    <property type="evidence" value="ECO:0007669"/>
    <property type="project" value="UniProtKB-UniRule"/>
</dbReference>
<dbReference type="CDD" id="cd01884">
    <property type="entry name" value="EF_Tu"/>
    <property type="match status" value="1"/>
</dbReference>
<dbReference type="CDD" id="cd03697">
    <property type="entry name" value="EFTU_II"/>
    <property type="match status" value="1"/>
</dbReference>
<dbReference type="CDD" id="cd03707">
    <property type="entry name" value="EFTU_III"/>
    <property type="match status" value="1"/>
</dbReference>
<dbReference type="FunFam" id="2.40.30.10:FF:000001">
    <property type="entry name" value="Elongation factor Tu"/>
    <property type="match status" value="1"/>
</dbReference>
<dbReference type="FunFam" id="3.40.50.300:FF:000003">
    <property type="entry name" value="Elongation factor Tu"/>
    <property type="match status" value="1"/>
</dbReference>
<dbReference type="Gene3D" id="3.40.50.300">
    <property type="entry name" value="P-loop containing nucleotide triphosphate hydrolases"/>
    <property type="match status" value="1"/>
</dbReference>
<dbReference type="Gene3D" id="2.40.30.10">
    <property type="entry name" value="Translation factors"/>
    <property type="match status" value="2"/>
</dbReference>
<dbReference type="HAMAP" id="MF_00118_B">
    <property type="entry name" value="EF_Tu_B"/>
    <property type="match status" value="1"/>
</dbReference>
<dbReference type="InterPro" id="IPR041709">
    <property type="entry name" value="EF-Tu_GTP-bd"/>
</dbReference>
<dbReference type="InterPro" id="IPR050055">
    <property type="entry name" value="EF-Tu_GTPase"/>
</dbReference>
<dbReference type="InterPro" id="IPR004161">
    <property type="entry name" value="EFTu-like_2"/>
</dbReference>
<dbReference type="InterPro" id="IPR033720">
    <property type="entry name" value="EFTU_2"/>
</dbReference>
<dbReference type="InterPro" id="IPR031157">
    <property type="entry name" value="G_TR_CS"/>
</dbReference>
<dbReference type="InterPro" id="IPR027417">
    <property type="entry name" value="P-loop_NTPase"/>
</dbReference>
<dbReference type="InterPro" id="IPR005225">
    <property type="entry name" value="Small_GTP-bd"/>
</dbReference>
<dbReference type="InterPro" id="IPR000795">
    <property type="entry name" value="T_Tr_GTP-bd_dom"/>
</dbReference>
<dbReference type="InterPro" id="IPR009000">
    <property type="entry name" value="Transl_B-barrel_sf"/>
</dbReference>
<dbReference type="InterPro" id="IPR009001">
    <property type="entry name" value="Transl_elong_EF1A/Init_IF2_C"/>
</dbReference>
<dbReference type="InterPro" id="IPR004541">
    <property type="entry name" value="Transl_elong_EFTu/EF1A_bac/org"/>
</dbReference>
<dbReference type="InterPro" id="IPR004160">
    <property type="entry name" value="Transl_elong_EFTu/EF1A_C"/>
</dbReference>
<dbReference type="NCBIfam" id="TIGR00485">
    <property type="entry name" value="EF-Tu"/>
    <property type="match status" value="1"/>
</dbReference>
<dbReference type="NCBIfam" id="NF000766">
    <property type="entry name" value="PRK00049.1"/>
    <property type="match status" value="1"/>
</dbReference>
<dbReference type="NCBIfam" id="NF009372">
    <property type="entry name" value="PRK12735.1"/>
    <property type="match status" value="1"/>
</dbReference>
<dbReference type="NCBIfam" id="NF009373">
    <property type="entry name" value="PRK12736.1"/>
    <property type="match status" value="1"/>
</dbReference>
<dbReference type="NCBIfam" id="TIGR00231">
    <property type="entry name" value="small_GTP"/>
    <property type="match status" value="1"/>
</dbReference>
<dbReference type="PANTHER" id="PTHR43721:SF22">
    <property type="entry name" value="ELONGATION FACTOR TU, MITOCHONDRIAL"/>
    <property type="match status" value="1"/>
</dbReference>
<dbReference type="PANTHER" id="PTHR43721">
    <property type="entry name" value="ELONGATION FACTOR TU-RELATED"/>
    <property type="match status" value="1"/>
</dbReference>
<dbReference type="Pfam" id="PF00009">
    <property type="entry name" value="GTP_EFTU"/>
    <property type="match status" value="1"/>
</dbReference>
<dbReference type="Pfam" id="PF03144">
    <property type="entry name" value="GTP_EFTU_D2"/>
    <property type="match status" value="1"/>
</dbReference>
<dbReference type="Pfam" id="PF03143">
    <property type="entry name" value="GTP_EFTU_D3"/>
    <property type="match status" value="1"/>
</dbReference>
<dbReference type="PRINTS" id="PR00315">
    <property type="entry name" value="ELONGATNFCT"/>
</dbReference>
<dbReference type="SUPFAM" id="SSF50465">
    <property type="entry name" value="EF-Tu/eEF-1alpha/eIF2-gamma C-terminal domain"/>
    <property type="match status" value="1"/>
</dbReference>
<dbReference type="SUPFAM" id="SSF52540">
    <property type="entry name" value="P-loop containing nucleoside triphosphate hydrolases"/>
    <property type="match status" value="1"/>
</dbReference>
<dbReference type="SUPFAM" id="SSF50447">
    <property type="entry name" value="Translation proteins"/>
    <property type="match status" value="1"/>
</dbReference>
<dbReference type="PROSITE" id="PS00301">
    <property type="entry name" value="G_TR_1"/>
    <property type="match status" value="1"/>
</dbReference>
<dbReference type="PROSITE" id="PS51722">
    <property type="entry name" value="G_TR_2"/>
    <property type="match status" value="1"/>
</dbReference>
<organism>
    <name type="scientific">Thiobacillus denitrificans (strain ATCC 25259 / T1)</name>
    <dbReference type="NCBI Taxonomy" id="292415"/>
    <lineage>
        <taxon>Bacteria</taxon>
        <taxon>Pseudomonadati</taxon>
        <taxon>Pseudomonadota</taxon>
        <taxon>Betaproteobacteria</taxon>
        <taxon>Nitrosomonadales</taxon>
        <taxon>Thiobacillaceae</taxon>
        <taxon>Thiobacillus</taxon>
    </lineage>
</organism>
<evidence type="ECO:0000250" key="1"/>
<evidence type="ECO:0000255" key="2">
    <source>
        <dbReference type="HAMAP-Rule" id="MF_00118"/>
    </source>
</evidence>
<feature type="chain" id="PRO_0000337563" description="Elongation factor Tu">
    <location>
        <begin position="1"/>
        <end position="396"/>
    </location>
</feature>
<feature type="domain" description="tr-type G">
    <location>
        <begin position="10"/>
        <end position="206"/>
    </location>
</feature>
<feature type="region of interest" description="G1" evidence="1">
    <location>
        <begin position="19"/>
        <end position="26"/>
    </location>
</feature>
<feature type="region of interest" description="G2" evidence="1">
    <location>
        <begin position="60"/>
        <end position="64"/>
    </location>
</feature>
<feature type="region of interest" description="G3" evidence="1">
    <location>
        <begin position="81"/>
        <end position="84"/>
    </location>
</feature>
<feature type="region of interest" description="G4" evidence="1">
    <location>
        <begin position="136"/>
        <end position="139"/>
    </location>
</feature>
<feature type="region of interest" description="G5" evidence="1">
    <location>
        <begin position="174"/>
        <end position="176"/>
    </location>
</feature>
<feature type="binding site" evidence="2">
    <location>
        <begin position="19"/>
        <end position="26"/>
    </location>
    <ligand>
        <name>GTP</name>
        <dbReference type="ChEBI" id="CHEBI:37565"/>
    </ligand>
</feature>
<feature type="binding site" evidence="2">
    <location>
        <position position="26"/>
    </location>
    <ligand>
        <name>Mg(2+)</name>
        <dbReference type="ChEBI" id="CHEBI:18420"/>
    </ligand>
</feature>
<feature type="binding site" evidence="2">
    <location>
        <begin position="81"/>
        <end position="85"/>
    </location>
    <ligand>
        <name>GTP</name>
        <dbReference type="ChEBI" id="CHEBI:37565"/>
    </ligand>
</feature>
<feature type="binding site" evidence="2">
    <location>
        <begin position="136"/>
        <end position="139"/>
    </location>
    <ligand>
        <name>GTP</name>
        <dbReference type="ChEBI" id="CHEBI:37565"/>
    </ligand>
</feature>